<proteinExistence type="evidence at protein level"/>
<dbReference type="EC" id="3.2.1.4" evidence="8"/>
<dbReference type="EMBL" id="M15665">
    <property type="protein sequence ID" value="AAA34212.1"/>
    <property type="molecule type" value="Genomic_DNA"/>
</dbReference>
<dbReference type="PIR" id="A25928">
    <property type="entry name" value="A25928"/>
</dbReference>
<dbReference type="PDB" id="1EG1">
    <property type="method" value="X-ray"/>
    <property type="resolution" value="3.60 A"/>
    <property type="chains" value="A/C=24-393"/>
</dbReference>
<dbReference type="PDB" id="4BMF">
    <property type="method" value="NMR"/>
    <property type="chains" value="A=422-459"/>
</dbReference>
<dbReference type="PDBsum" id="1EG1"/>
<dbReference type="PDBsum" id="4BMF"/>
<dbReference type="BMRB" id="P07981"/>
<dbReference type="SMR" id="P07981"/>
<dbReference type="CAZy" id="CBM1">
    <property type="family name" value="Carbohydrate-Binding Module Family 1"/>
</dbReference>
<dbReference type="CAZy" id="GH7">
    <property type="family name" value="Glycoside Hydrolase Family 7"/>
</dbReference>
<dbReference type="GlyCosmos" id="P07981">
    <property type="glycosylation" value="3 sites, No reported glycans"/>
</dbReference>
<dbReference type="iPTMnet" id="P07981"/>
<dbReference type="VEuPathDB" id="FungiDB:TrQ_002418"/>
<dbReference type="OMA" id="FSIWNDN"/>
<dbReference type="BioCyc" id="MetaCyc:MONOMER-16501"/>
<dbReference type="BRENDA" id="3.2.1.4">
    <property type="organism ID" value="6451"/>
</dbReference>
<dbReference type="EvolutionaryTrace" id="P07981"/>
<dbReference type="GO" id="GO:0005576">
    <property type="term" value="C:extracellular region"/>
    <property type="evidence" value="ECO:0007669"/>
    <property type="project" value="UniProtKB-SubCell"/>
</dbReference>
<dbReference type="GO" id="GO:0008810">
    <property type="term" value="F:cellulase activity"/>
    <property type="evidence" value="ECO:0007669"/>
    <property type="project" value="UniProtKB-EC"/>
</dbReference>
<dbReference type="GO" id="GO:0030248">
    <property type="term" value="F:cellulose binding"/>
    <property type="evidence" value="ECO:0007669"/>
    <property type="project" value="InterPro"/>
</dbReference>
<dbReference type="GO" id="GO:0030245">
    <property type="term" value="P:cellulose catabolic process"/>
    <property type="evidence" value="ECO:0007669"/>
    <property type="project" value="UniProtKB-KW"/>
</dbReference>
<dbReference type="CDD" id="cd07999">
    <property type="entry name" value="GH7_CBH_EG"/>
    <property type="match status" value="1"/>
</dbReference>
<dbReference type="Gene3D" id="2.70.100.10">
    <property type="entry name" value="Glycoside hydrolase, family 7, domain"/>
    <property type="match status" value="1"/>
</dbReference>
<dbReference type="InterPro" id="IPR035971">
    <property type="entry name" value="CBD_sf"/>
</dbReference>
<dbReference type="InterPro" id="IPR000254">
    <property type="entry name" value="Cellulose-bd_dom_fun"/>
</dbReference>
<dbReference type="InterPro" id="IPR013320">
    <property type="entry name" value="ConA-like_dom_sf"/>
</dbReference>
<dbReference type="InterPro" id="IPR001722">
    <property type="entry name" value="Glyco_hydro_7"/>
</dbReference>
<dbReference type="InterPro" id="IPR037019">
    <property type="entry name" value="Glyco_hydro_7_sf"/>
</dbReference>
<dbReference type="PANTHER" id="PTHR33753">
    <property type="entry name" value="1,4-BETA-D-GLUCAN CELLOBIOHYDROLASE B"/>
    <property type="match status" value="1"/>
</dbReference>
<dbReference type="PANTHER" id="PTHR33753:SF1">
    <property type="entry name" value="ENDO-BETA-1,4-GLUCANASE CELB"/>
    <property type="match status" value="1"/>
</dbReference>
<dbReference type="Pfam" id="PF00734">
    <property type="entry name" value="CBM_1"/>
    <property type="match status" value="1"/>
</dbReference>
<dbReference type="Pfam" id="PF00840">
    <property type="entry name" value="Glyco_hydro_7"/>
    <property type="match status" value="1"/>
</dbReference>
<dbReference type="PRINTS" id="PR00734">
    <property type="entry name" value="GLHYDRLASE7"/>
</dbReference>
<dbReference type="SMART" id="SM00236">
    <property type="entry name" value="fCBD"/>
    <property type="match status" value="1"/>
</dbReference>
<dbReference type="SUPFAM" id="SSF57180">
    <property type="entry name" value="Cellulose-binding domain"/>
    <property type="match status" value="1"/>
</dbReference>
<dbReference type="SUPFAM" id="SSF49899">
    <property type="entry name" value="Concanavalin A-like lectins/glucanases"/>
    <property type="match status" value="1"/>
</dbReference>
<dbReference type="PROSITE" id="PS00562">
    <property type="entry name" value="CBM1_1"/>
    <property type="match status" value="1"/>
</dbReference>
<dbReference type="PROSITE" id="PS51164">
    <property type="entry name" value="CBM1_2"/>
    <property type="match status" value="1"/>
</dbReference>
<keyword id="KW-0002">3D-structure</keyword>
<keyword id="KW-0119">Carbohydrate metabolism</keyword>
<keyword id="KW-0136">Cellulose degradation</keyword>
<keyword id="KW-0903">Direct protein sequencing</keyword>
<keyword id="KW-1015">Disulfide bond</keyword>
<keyword id="KW-0325">Glycoprotein</keyword>
<keyword id="KW-0326">Glycosidase</keyword>
<keyword id="KW-0378">Hydrolase</keyword>
<keyword id="KW-0624">Polysaccharide degradation</keyword>
<keyword id="KW-0873">Pyrrolidone carboxylic acid</keyword>
<keyword id="KW-0964">Secreted</keyword>
<keyword id="KW-0732">Signal</keyword>
<feature type="signal peptide" evidence="9">
    <location>
        <begin position="1"/>
        <end position="22"/>
    </location>
</feature>
<feature type="chain" id="PRO_0000007915" description="Endoglucanase EG-1">
    <location>
        <begin position="23"/>
        <end position="459"/>
    </location>
</feature>
<feature type="domain" description="CBM1" evidence="3">
    <location>
        <begin position="423"/>
        <end position="459"/>
    </location>
</feature>
<feature type="region of interest" description="Catalytic" evidence="11">
    <location>
        <begin position="23"/>
        <end position="397"/>
    </location>
</feature>
<feature type="region of interest" description="Disordered" evidence="4">
    <location>
        <begin position="390"/>
        <end position="425"/>
    </location>
</feature>
<feature type="region of interest" description="Linker" evidence="10">
    <location>
        <begin position="398"/>
        <end position="423"/>
    </location>
</feature>
<feature type="compositionally biased region" description="Low complexity" evidence="4">
    <location>
        <begin position="404"/>
        <end position="425"/>
    </location>
</feature>
<feature type="active site" description="Nucleophile" evidence="6">
    <location>
        <position position="218"/>
    </location>
</feature>
<feature type="active site" description="Proton donor/acceptor" evidence="6">
    <location>
        <position position="223"/>
    </location>
</feature>
<feature type="site" description="Not glycosylated" evidence="1">
    <location>
        <position position="164"/>
    </location>
</feature>
<feature type="site" description="Not glycosylated" evidence="1">
    <location>
        <position position="208"/>
    </location>
</feature>
<feature type="site" description="Not glycosylated" evidence="1">
    <location>
        <position position="281"/>
    </location>
</feature>
<feature type="modified residue" description="Pyrrolidone carboxylic acid" evidence="6 9">
    <location>
        <position position="23"/>
    </location>
</feature>
<feature type="glycosylation site" description="N-linked (GlcNAc) asparagine" evidence="1 11">
    <location>
        <position position="78"/>
    </location>
</feature>
<feature type="glycosylation site" description="N-linked (GlcNAc...) (high mannose) asparagine" evidence="1 11">
    <location>
        <position position="204"/>
    </location>
</feature>
<feature type="glycosylation site" description="N-linked (GlcNAc...) asparagine" evidence="1">
    <location>
        <position position="394"/>
    </location>
</feature>
<feature type="disulfide bond" evidence="6 12">
    <location>
        <begin position="41"/>
        <end position="47"/>
    </location>
</feature>
<feature type="disulfide bond" evidence="6 12">
    <location>
        <begin position="71"/>
        <end position="92"/>
    </location>
</feature>
<feature type="disulfide bond" evidence="6 12">
    <location>
        <begin position="82"/>
        <end position="88"/>
    </location>
</feature>
<feature type="disulfide bond" evidence="6 12">
    <location>
        <begin position="161"/>
        <end position="360"/>
    </location>
</feature>
<feature type="disulfide bond" evidence="6 12">
    <location>
        <begin position="193"/>
        <end position="216"/>
    </location>
</feature>
<feature type="disulfide bond" evidence="6 12">
    <location>
        <begin position="197"/>
        <end position="215"/>
    </location>
</feature>
<feature type="disulfide bond" evidence="6 12">
    <location>
        <begin position="236"/>
        <end position="241"/>
    </location>
</feature>
<feature type="disulfide bond" evidence="6 12">
    <location>
        <begin position="246"/>
        <end position="315"/>
    </location>
</feature>
<feature type="disulfide bond" evidence="7 13">
    <location>
        <begin position="423"/>
        <end position="439"/>
    </location>
</feature>
<feature type="disulfide bond" evidence="7 13">
    <location>
        <begin position="431"/>
        <end position="448"/>
    </location>
</feature>
<feature type="disulfide bond" evidence="7 13">
    <location>
        <begin position="442"/>
        <end position="458"/>
    </location>
</feature>
<feature type="strand" evidence="14">
    <location>
        <begin position="448"/>
        <end position="454"/>
    </location>
</feature>
<feature type="strand" evidence="14">
    <location>
        <begin position="456"/>
        <end position="458"/>
    </location>
</feature>
<sequence length="459" mass="48208">MAPSVTLPLTTAILAIARLVAAQQPGTSTPEVHPKLTTYKCTKSGGCVAQDTSVVLDWNYRWMHDANYNSCTVNGGVNTTLCPDEATCGKNCFIEGVDYAASGVTTSGSSLTMNQYMPSSSGGYSSVSPRLYLLDSDGEYVMLKLNGQELSFDVDLSALPCGENGSLYLSQMDENGGANQYNTAGANYGSGYCDAQCPVQTWRNGTLNTSHQGFCCNEMDILEGNSRANALTPHSCTATACDSAGCGFNPYGSGYKSYYGPGDTVDTSKTFTIITQFNTDNGSPSGNLVSITRKYQQNGVDIPSAQPGGDTISSCPSASAYGGLATMGKALSSGMVLVFSIWNDNSQYMNWLDSGNAGPCSSTEGNPSNILANNPNTHVVFSNIRWGDIGSTTNSTAPPPPPASSTTFSTTRRSSTTSSSPSCTQTHWGQCGGIGYSGCKTCTSGTTCQYSNDYYSQCL</sequence>
<accession>P07981</accession>
<name>GUN1_HYPJE</name>
<gene>
    <name type="primary">egl1</name>
</gene>
<evidence type="ECO:0000250" key="1">
    <source>
        <dbReference type="UniProtKB" id="A0A024SNB7"/>
    </source>
</evidence>
<evidence type="ECO:0000250" key="2">
    <source>
        <dbReference type="UniProtKB" id="P62694"/>
    </source>
</evidence>
<evidence type="ECO:0000255" key="3">
    <source>
        <dbReference type="PROSITE-ProRule" id="PRU00597"/>
    </source>
</evidence>
<evidence type="ECO:0000256" key="4">
    <source>
        <dbReference type="SAM" id="MobiDB-lite"/>
    </source>
</evidence>
<evidence type="ECO:0000269" key="5">
    <source>
    </source>
</evidence>
<evidence type="ECO:0000269" key="6">
    <source>
    </source>
</evidence>
<evidence type="ECO:0000269" key="7">
    <source>
    </source>
</evidence>
<evidence type="ECO:0000269" key="8">
    <source ref="2"/>
</evidence>
<evidence type="ECO:0000269" key="9">
    <source ref="3"/>
</evidence>
<evidence type="ECO:0000305" key="10"/>
<evidence type="ECO:0000305" key="11">
    <source>
    </source>
</evidence>
<evidence type="ECO:0007744" key="12">
    <source>
        <dbReference type="PDB" id="1EG1"/>
    </source>
</evidence>
<evidence type="ECO:0007744" key="13">
    <source>
        <dbReference type="PDB" id="4BMF"/>
    </source>
</evidence>
<evidence type="ECO:0007829" key="14">
    <source>
        <dbReference type="PDB" id="4BMF"/>
    </source>
</evidence>
<organism>
    <name type="scientific">Hypocrea jecorina</name>
    <name type="common">Trichoderma reesei</name>
    <dbReference type="NCBI Taxonomy" id="51453"/>
    <lineage>
        <taxon>Eukaryota</taxon>
        <taxon>Fungi</taxon>
        <taxon>Dikarya</taxon>
        <taxon>Ascomycota</taxon>
        <taxon>Pezizomycotina</taxon>
        <taxon>Sordariomycetes</taxon>
        <taxon>Hypocreomycetidae</taxon>
        <taxon>Hypocreales</taxon>
        <taxon>Hypocreaceae</taxon>
        <taxon>Trichoderma</taxon>
    </lineage>
</organism>
<reference key="1">
    <citation type="journal article" date="1986" name="Gene">
        <title>Homology between cellulase genes of Trichoderma reesei: complete nucleotide sequence of the endoglucanase I gene.</title>
        <authorList>
            <person name="Penttilae M."/>
            <person name="Lehtovaara P."/>
            <person name="Nevalainen H."/>
            <person name="Bhikhabhai R."/>
            <person name="Knowles J.K.C."/>
        </authorList>
    </citation>
    <scope>NUCLEOTIDE SEQUENCE [GENOMIC DNA]</scope>
    <source>
        <strain>VTT-D-80133</strain>
    </source>
</reference>
<reference key="2">
    <citation type="journal article" date="1987" name="Biotechnology (N.Y.)">
        <title>Cloning, characterization, and expression in Saccharomyces cerevisiae of endoglucanase I from Trichoderma reesei.</title>
        <authorList>
            <person name="van Arsdell J.N."/>
            <person name="Kwok S."/>
            <person name="Schweickart V.L."/>
            <person name="Ladner M.B."/>
            <person name="Gelfand D.H."/>
            <person name="Innis M.A."/>
        </authorList>
    </citation>
    <scope>NUCLEOTIDE SEQUENCE [GENOMIC DNA]</scope>
    <scope>FUNCTION</scope>
    <scope>CATALYTIC ACTIVITY</scope>
    <source>
        <strain>L27</strain>
    </source>
</reference>
<reference key="3">
    <citation type="journal article" date="1983" name="Biotechnology (N.Y.)">
        <title>Characterization and properties of cellulases purified from Trichoderma reesei strain L27.</title>
        <authorList>
            <person name="Shoemaker S."/>
            <person name="Watt K."/>
            <person name="Tsitovsky G."/>
            <person name="Cox R."/>
        </authorList>
    </citation>
    <scope>PROTEIN SEQUENCE OF 23-53</scope>
    <scope>PYROGLUTAMATE FORMATION AT GLN-23</scope>
    <scope>SUBCELLULAR LOCATION</scope>
    <source>
        <strain>L27</strain>
    </source>
</reference>
<reference key="4">
    <citation type="journal article" date="1989" name="FEBS Lett.">
        <title>Identification of a functionally important carboxyl group in cellobiohydrolase I from Trichoderma reesei.</title>
        <authorList>
            <person name="Tomme P."/>
            <person name="Clayssens M."/>
        </authorList>
    </citation>
    <scope>PUTATIVE ACTIVE SITE GLU-149</scope>
</reference>
<reference key="5">
    <citation type="journal article" date="1997" name="J. Mol. Biol.">
        <title>The crystal structure of the catalytic core domain of endoglucanase I from Trichoderma reesei at 3.6-A resolution, and a comparison with related enzymes.</title>
        <authorList>
            <person name="Kleywegt G.J."/>
            <person name="Zou J.-Y."/>
            <person name="Divne C."/>
            <person name="Davies G.J."/>
            <person name="Sinning I."/>
            <person name="Staehlberg J."/>
            <person name="Reinikainen T."/>
            <person name="Srisodsuk M."/>
            <person name="Teeri T.T."/>
            <person name="Jones T.A."/>
        </authorList>
    </citation>
    <scope>X-RAY CRYSTALLOGRAPHY (3.6 ANGSTROMS) OF 23-393</scope>
    <scope>PYROGLUTAMATE FORMATION AT GLN-23</scope>
    <scope>DISULFIDE BONDS</scope>
</reference>
<reference key="6">
    <citation type="journal article" date="1998" name="Eur. J. Biochem.">
        <title>Solution structure of the cellulose-binding domain of endoglucanase I from Trichoderma reesei and its interaction with cello-oligosaccharides.</title>
        <authorList>
            <person name="Mattinen M.L."/>
            <person name="Linder M."/>
            <person name="Drakenberg T."/>
            <person name="Annila A."/>
        </authorList>
    </citation>
    <scope>STRUCTURE BY NMR OF 422-459</scope>
    <scope>DISULFIDE BONDS</scope>
</reference>
<protein>
    <recommendedName>
        <fullName>Endoglucanase EG-1</fullName>
        <ecNumber evidence="8">3.2.1.4</ecNumber>
    </recommendedName>
    <alternativeName>
        <fullName>Cellulase</fullName>
    </alternativeName>
    <alternativeName>
        <fullName>Endo-1,4-beta-glucanase</fullName>
    </alternativeName>
</protein>
<comment type="function">
    <text evidence="5 10">Endoglucanase (EG) that cleaves the internal beta-1,4-glucosidic bonds in cellulose (PubMed:2948877). The degradation of cellulose involves an interplay between different cellulolytic enzymes. Hydrolysis starts with EGs, which cut internal glycosidic linkages to reduce the polymerization degree of the substrate and creates new chain ends for exocellobiohydrolases (CBHs). The CBH release the disaccharide cellobiose from the non-reducing end of the cellulose polymer chain. Finally, beta-1,4-glucosidases hydrolyze the cellobiose and other short cello-oligosaccharides into glucose units (Probable).</text>
</comment>
<comment type="catalytic activity">
    <reaction evidence="8">
        <text>Endohydrolysis of (1-&gt;4)-beta-D-glucosidic linkages in cellulose, lichenin and cereal beta-D-glucans.</text>
        <dbReference type="EC" id="3.2.1.4"/>
    </reaction>
</comment>
<comment type="subcellular location">
    <subcellularLocation>
        <location evidence="9">Secreted</location>
    </subcellularLocation>
</comment>
<comment type="domain">
    <text evidence="2">The enzyme consists of two functional domains, a catalytic core joined to a carbohydrate-binding domain (CBM) by a serine-, threonine-, and proline-rich, highly glycosylated linker sequence.</text>
</comment>
<comment type="PTM">
    <text evidence="1">Asn-204 contains mainly a high-mannose-type glycan (Hex(7-9)GlcNAc(2)), with a small fraction (8%) bearing a single GlcNAc at this site.</text>
</comment>
<comment type="similarity">
    <text evidence="10">Belongs to the glycosyl hydrolase 7 (cellulase C) family.</text>
</comment>
<comment type="caution">
    <text evidence="10">Was originally called endoglucanase EG-II.</text>
</comment>